<name>YUZF_BACSU</name>
<dbReference type="EMBL" id="AL009126">
    <property type="protein sequence ID" value="CAB15170.1"/>
    <property type="molecule type" value="Genomic_DNA"/>
</dbReference>
<dbReference type="PIR" id="E70026">
    <property type="entry name" value="E70026"/>
</dbReference>
<dbReference type="RefSeq" id="NP_391060.1">
    <property type="nucleotide sequence ID" value="NC_000964.3"/>
</dbReference>
<dbReference type="RefSeq" id="WP_003220677.1">
    <property type="nucleotide sequence ID" value="NZ_OZ025638.1"/>
</dbReference>
<dbReference type="SMR" id="O32097"/>
<dbReference type="FunCoup" id="O32097">
    <property type="interactions" value="45"/>
</dbReference>
<dbReference type="PaxDb" id="224308-BSU31820"/>
<dbReference type="EnsemblBacteria" id="CAB15170">
    <property type="protein sequence ID" value="CAB15170"/>
    <property type="gene ID" value="BSU_31820"/>
</dbReference>
<dbReference type="GeneID" id="936562"/>
<dbReference type="KEGG" id="bsu:BSU31820"/>
<dbReference type="PATRIC" id="fig|224308.179.peg.3448"/>
<dbReference type="InParanoid" id="O32097"/>
<dbReference type="OrthoDB" id="2439488at2"/>
<dbReference type="BioCyc" id="BSUB:BSU31820-MONOMER"/>
<dbReference type="Proteomes" id="UP000001570">
    <property type="component" value="Chromosome"/>
</dbReference>
<dbReference type="InterPro" id="IPR020139">
    <property type="entry name" value="DUF2642"/>
</dbReference>
<dbReference type="Pfam" id="PF10842">
    <property type="entry name" value="DUF2642"/>
    <property type="match status" value="1"/>
</dbReference>
<keyword id="KW-1185">Reference proteome</keyword>
<sequence length="78" mass="8865">MVNQGSPQLVSLVDPYVYQTIKKLIGSRFVIQTVRDTVRGRLIDVKPDHITIEGARNSVCLIRIQHMISVTPDYSERV</sequence>
<organism>
    <name type="scientific">Bacillus subtilis (strain 168)</name>
    <dbReference type="NCBI Taxonomy" id="224308"/>
    <lineage>
        <taxon>Bacteria</taxon>
        <taxon>Bacillati</taxon>
        <taxon>Bacillota</taxon>
        <taxon>Bacilli</taxon>
        <taxon>Bacillales</taxon>
        <taxon>Bacillaceae</taxon>
        <taxon>Bacillus</taxon>
    </lineage>
</organism>
<gene>
    <name type="primary">yuzF</name>
    <name type="ordered locus">BSU31820</name>
</gene>
<reference key="1">
    <citation type="journal article" date="1997" name="Nature">
        <title>The complete genome sequence of the Gram-positive bacterium Bacillus subtilis.</title>
        <authorList>
            <person name="Kunst F."/>
            <person name="Ogasawara N."/>
            <person name="Moszer I."/>
            <person name="Albertini A.M."/>
            <person name="Alloni G."/>
            <person name="Azevedo V."/>
            <person name="Bertero M.G."/>
            <person name="Bessieres P."/>
            <person name="Bolotin A."/>
            <person name="Borchert S."/>
            <person name="Borriss R."/>
            <person name="Boursier L."/>
            <person name="Brans A."/>
            <person name="Braun M."/>
            <person name="Brignell S.C."/>
            <person name="Bron S."/>
            <person name="Brouillet S."/>
            <person name="Bruschi C.V."/>
            <person name="Caldwell B."/>
            <person name="Capuano V."/>
            <person name="Carter N.M."/>
            <person name="Choi S.-K."/>
            <person name="Codani J.-J."/>
            <person name="Connerton I.F."/>
            <person name="Cummings N.J."/>
            <person name="Daniel R.A."/>
            <person name="Denizot F."/>
            <person name="Devine K.M."/>
            <person name="Duesterhoeft A."/>
            <person name="Ehrlich S.D."/>
            <person name="Emmerson P.T."/>
            <person name="Entian K.-D."/>
            <person name="Errington J."/>
            <person name="Fabret C."/>
            <person name="Ferrari E."/>
            <person name="Foulger D."/>
            <person name="Fritz C."/>
            <person name="Fujita M."/>
            <person name="Fujita Y."/>
            <person name="Fuma S."/>
            <person name="Galizzi A."/>
            <person name="Galleron N."/>
            <person name="Ghim S.-Y."/>
            <person name="Glaser P."/>
            <person name="Goffeau A."/>
            <person name="Golightly E.J."/>
            <person name="Grandi G."/>
            <person name="Guiseppi G."/>
            <person name="Guy B.J."/>
            <person name="Haga K."/>
            <person name="Haiech J."/>
            <person name="Harwood C.R."/>
            <person name="Henaut A."/>
            <person name="Hilbert H."/>
            <person name="Holsappel S."/>
            <person name="Hosono S."/>
            <person name="Hullo M.-F."/>
            <person name="Itaya M."/>
            <person name="Jones L.-M."/>
            <person name="Joris B."/>
            <person name="Karamata D."/>
            <person name="Kasahara Y."/>
            <person name="Klaerr-Blanchard M."/>
            <person name="Klein C."/>
            <person name="Kobayashi Y."/>
            <person name="Koetter P."/>
            <person name="Koningstein G."/>
            <person name="Krogh S."/>
            <person name="Kumano M."/>
            <person name="Kurita K."/>
            <person name="Lapidus A."/>
            <person name="Lardinois S."/>
            <person name="Lauber J."/>
            <person name="Lazarevic V."/>
            <person name="Lee S.-M."/>
            <person name="Levine A."/>
            <person name="Liu H."/>
            <person name="Masuda S."/>
            <person name="Mauel C."/>
            <person name="Medigue C."/>
            <person name="Medina N."/>
            <person name="Mellado R.P."/>
            <person name="Mizuno M."/>
            <person name="Moestl D."/>
            <person name="Nakai S."/>
            <person name="Noback M."/>
            <person name="Noone D."/>
            <person name="O'Reilly M."/>
            <person name="Ogawa K."/>
            <person name="Ogiwara A."/>
            <person name="Oudega B."/>
            <person name="Park S.-H."/>
            <person name="Parro V."/>
            <person name="Pohl T.M."/>
            <person name="Portetelle D."/>
            <person name="Porwollik S."/>
            <person name="Prescott A.M."/>
            <person name="Presecan E."/>
            <person name="Pujic P."/>
            <person name="Purnelle B."/>
            <person name="Rapoport G."/>
            <person name="Rey M."/>
            <person name="Reynolds S."/>
            <person name="Rieger M."/>
            <person name="Rivolta C."/>
            <person name="Rocha E."/>
            <person name="Roche B."/>
            <person name="Rose M."/>
            <person name="Sadaie Y."/>
            <person name="Sato T."/>
            <person name="Scanlan E."/>
            <person name="Schleich S."/>
            <person name="Schroeter R."/>
            <person name="Scoffone F."/>
            <person name="Sekiguchi J."/>
            <person name="Sekowska A."/>
            <person name="Seror S.J."/>
            <person name="Serror P."/>
            <person name="Shin B.-S."/>
            <person name="Soldo B."/>
            <person name="Sorokin A."/>
            <person name="Tacconi E."/>
            <person name="Takagi T."/>
            <person name="Takahashi H."/>
            <person name="Takemaru K."/>
            <person name="Takeuchi M."/>
            <person name="Tamakoshi A."/>
            <person name="Tanaka T."/>
            <person name="Terpstra P."/>
            <person name="Tognoni A."/>
            <person name="Tosato V."/>
            <person name="Uchiyama S."/>
            <person name="Vandenbol M."/>
            <person name="Vannier F."/>
            <person name="Vassarotti A."/>
            <person name="Viari A."/>
            <person name="Wambutt R."/>
            <person name="Wedler E."/>
            <person name="Wedler H."/>
            <person name="Weitzenegger T."/>
            <person name="Winters P."/>
            <person name="Wipat A."/>
            <person name="Yamamoto H."/>
            <person name="Yamane K."/>
            <person name="Yasumoto K."/>
            <person name="Yata K."/>
            <person name="Yoshida K."/>
            <person name="Yoshikawa H.-F."/>
            <person name="Zumstein E."/>
            <person name="Yoshikawa H."/>
            <person name="Danchin A."/>
        </authorList>
    </citation>
    <scope>NUCLEOTIDE SEQUENCE [LARGE SCALE GENOMIC DNA]</scope>
    <source>
        <strain>168</strain>
    </source>
</reference>
<accession>O32097</accession>
<proteinExistence type="predicted"/>
<feature type="chain" id="PRO_0000049932" description="Uncharacterized protein YuzF">
    <location>
        <begin position="1"/>
        <end position="78"/>
    </location>
</feature>
<protein>
    <recommendedName>
        <fullName>Uncharacterized protein YuzF</fullName>
    </recommendedName>
</protein>